<feature type="propeptide" id="PRO_0000333662" evidence="2">
    <location>
        <begin position="1"/>
        <end status="unknown"/>
    </location>
</feature>
<feature type="chain" id="PRO_0000333663" description="Metacaspase-1B">
    <location>
        <begin status="unknown"/>
        <end position="426"/>
    </location>
</feature>
<feature type="region of interest" description="Disordered" evidence="3">
    <location>
        <begin position="1"/>
        <end position="111"/>
    </location>
</feature>
<feature type="compositionally biased region" description="Gly residues" evidence="3">
    <location>
        <begin position="1"/>
        <end position="14"/>
    </location>
</feature>
<feature type="compositionally biased region" description="Low complexity" evidence="3">
    <location>
        <begin position="21"/>
        <end position="68"/>
    </location>
</feature>
<feature type="active site" evidence="1">
    <location>
        <position position="217"/>
    </location>
</feature>
<feature type="active site" evidence="1">
    <location>
        <position position="273"/>
    </location>
</feature>
<evidence type="ECO:0000250" key="1"/>
<evidence type="ECO:0000255" key="2"/>
<evidence type="ECO:0000256" key="3">
    <source>
        <dbReference type="SAM" id="MobiDB-lite"/>
    </source>
</evidence>
<evidence type="ECO:0000305" key="4"/>
<reference key="1">
    <citation type="journal article" date="2003" name="Nature">
        <title>The genome sequence of the filamentous fungus Neurospora crassa.</title>
        <authorList>
            <person name="Galagan J.E."/>
            <person name="Calvo S.E."/>
            <person name="Borkovich K.A."/>
            <person name="Selker E.U."/>
            <person name="Read N.D."/>
            <person name="Jaffe D.B."/>
            <person name="FitzHugh W."/>
            <person name="Ma L.-J."/>
            <person name="Smirnov S."/>
            <person name="Purcell S."/>
            <person name="Rehman B."/>
            <person name="Elkins T."/>
            <person name="Engels R."/>
            <person name="Wang S."/>
            <person name="Nielsen C.B."/>
            <person name="Butler J."/>
            <person name="Endrizzi M."/>
            <person name="Qui D."/>
            <person name="Ianakiev P."/>
            <person name="Bell-Pedersen D."/>
            <person name="Nelson M.A."/>
            <person name="Werner-Washburne M."/>
            <person name="Selitrennikoff C.P."/>
            <person name="Kinsey J.A."/>
            <person name="Braun E.L."/>
            <person name="Zelter A."/>
            <person name="Schulte U."/>
            <person name="Kothe G.O."/>
            <person name="Jedd G."/>
            <person name="Mewes H.-W."/>
            <person name="Staben C."/>
            <person name="Marcotte E."/>
            <person name="Greenberg D."/>
            <person name="Roy A."/>
            <person name="Foley K."/>
            <person name="Naylor J."/>
            <person name="Stange-Thomann N."/>
            <person name="Barrett R."/>
            <person name="Gnerre S."/>
            <person name="Kamal M."/>
            <person name="Kamvysselis M."/>
            <person name="Mauceli E.W."/>
            <person name="Bielke C."/>
            <person name="Rudd S."/>
            <person name="Frishman D."/>
            <person name="Krystofova S."/>
            <person name="Rasmussen C."/>
            <person name="Metzenberg R.L."/>
            <person name="Perkins D.D."/>
            <person name="Kroken S."/>
            <person name="Cogoni C."/>
            <person name="Macino G."/>
            <person name="Catcheside D.E.A."/>
            <person name="Li W."/>
            <person name="Pratt R.J."/>
            <person name="Osmani S.A."/>
            <person name="DeSouza C.P.C."/>
            <person name="Glass N.L."/>
            <person name="Orbach M.J."/>
            <person name="Berglund J.A."/>
            <person name="Voelker R."/>
            <person name="Yarden O."/>
            <person name="Plamann M."/>
            <person name="Seiler S."/>
            <person name="Dunlap J.C."/>
            <person name="Radford A."/>
            <person name="Aramayo R."/>
            <person name="Natvig D.O."/>
            <person name="Alex L.A."/>
            <person name="Mannhaupt G."/>
            <person name="Ebbole D.J."/>
            <person name="Freitag M."/>
            <person name="Paulsen I."/>
            <person name="Sachs M.S."/>
            <person name="Lander E.S."/>
            <person name="Nusbaum C."/>
            <person name="Birren B.W."/>
        </authorList>
    </citation>
    <scope>NUCLEOTIDE SEQUENCE [LARGE SCALE GENOMIC DNA]</scope>
    <source>
        <strain>ATCC 24698 / 74-OR23-1A / CBS 708.71 / DSM 1257 / FGSC 987</strain>
    </source>
</reference>
<proteinExistence type="inferred from homology"/>
<comment type="function">
    <text evidence="1">Involved in cell death (apoptosis).</text>
</comment>
<comment type="similarity">
    <text evidence="4">Belongs to the peptidase C14B family.</text>
</comment>
<sequence>MSGYPGAGYNGGGYVPPPQPQYGGYYPPQPAYNAYQQPPPQQQQYMVYHQPSPGPQQHQHWNPQQQTPAPQGYGNPPNSHYGRPEANMPTVNSNSYAHGNHQAPPPPPQAPQQFGYGAPADYAFRYSQCNGRHKALLIGINYFGQRGQLRGCINDVRNMSSYLVEHFRYKREDMVILTDDQQNPMSQPTKQNILRAMHWLVKDARPNDSLFFHYSGHGGQTKDLDGDEEDGYDEVIYPVDFRQVGHITDDEMHRIMVRPLQAGVRLTAIFDSCHSGTALDLPYIYSTQGILKEPNLAKEAGQGLLGAISSYSQGDLYGVANNIMGIFKKATGGNDAHARTLATKTSPADVVMFSGSKDDQTSADATIASQATGAMSWAFINALKKNPQQSYVQLLNSIRDELQMRYTQKPQLSCSHPLDTNLLFVM</sequence>
<keyword id="KW-0053">Apoptosis</keyword>
<keyword id="KW-0378">Hydrolase</keyword>
<keyword id="KW-0645">Protease</keyword>
<keyword id="KW-1185">Reference proteome</keyword>
<keyword id="KW-0788">Thiol protease</keyword>
<keyword id="KW-0865">Zymogen</keyword>
<dbReference type="EC" id="3.4.22.-"/>
<dbReference type="EMBL" id="CM002242">
    <property type="protein sequence ID" value="EAA30484.2"/>
    <property type="molecule type" value="Genomic_DNA"/>
</dbReference>
<dbReference type="RefSeq" id="XP_959720.2">
    <property type="nucleotide sequence ID" value="XM_954627.2"/>
</dbReference>
<dbReference type="SMR" id="Q7S4N5"/>
<dbReference type="FunCoup" id="Q7S4N5">
    <property type="interactions" value="344"/>
</dbReference>
<dbReference type="STRING" id="367110.Q7S4N5"/>
<dbReference type="PaxDb" id="5141-EFNCRP00000003268"/>
<dbReference type="EnsemblFungi" id="EAA30484">
    <property type="protein sequence ID" value="EAA30484"/>
    <property type="gene ID" value="NCU02400"/>
</dbReference>
<dbReference type="GeneID" id="3875867"/>
<dbReference type="KEGG" id="ncr:NCU02400"/>
<dbReference type="VEuPathDB" id="FungiDB:NCU02400"/>
<dbReference type="HOGENOM" id="CLU_029389_0_2_1"/>
<dbReference type="InParanoid" id="Q7S4N5"/>
<dbReference type="OrthoDB" id="3223806at2759"/>
<dbReference type="Proteomes" id="UP000001805">
    <property type="component" value="Chromosome 7, Linkage Group VII"/>
</dbReference>
<dbReference type="GO" id="GO:0005737">
    <property type="term" value="C:cytoplasm"/>
    <property type="evidence" value="ECO:0000318"/>
    <property type="project" value="GO_Central"/>
</dbReference>
<dbReference type="GO" id="GO:0004197">
    <property type="term" value="F:cysteine-type endopeptidase activity"/>
    <property type="evidence" value="ECO:0000318"/>
    <property type="project" value="GO_Central"/>
</dbReference>
<dbReference type="GO" id="GO:0006915">
    <property type="term" value="P:apoptotic process"/>
    <property type="evidence" value="ECO:0007669"/>
    <property type="project" value="UniProtKB-KW"/>
</dbReference>
<dbReference type="GO" id="GO:0006508">
    <property type="term" value="P:proteolysis"/>
    <property type="evidence" value="ECO:0000318"/>
    <property type="project" value="GO_Central"/>
</dbReference>
<dbReference type="Gene3D" id="3.40.50.12660">
    <property type="match status" value="1"/>
</dbReference>
<dbReference type="InterPro" id="IPR029030">
    <property type="entry name" value="Caspase-like_dom_sf"/>
</dbReference>
<dbReference type="InterPro" id="IPR050452">
    <property type="entry name" value="Metacaspase"/>
</dbReference>
<dbReference type="InterPro" id="IPR011600">
    <property type="entry name" value="Pept_C14_caspase"/>
</dbReference>
<dbReference type="PANTHER" id="PTHR48104:SF30">
    <property type="entry name" value="METACASPASE-1"/>
    <property type="match status" value="1"/>
</dbReference>
<dbReference type="PANTHER" id="PTHR48104">
    <property type="entry name" value="METACASPASE-4"/>
    <property type="match status" value="1"/>
</dbReference>
<dbReference type="Pfam" id="PF00656">
    <property type="entry name" value="Peptidase_C14"/>
    <property type="match status" value="1"/>
</dbReference>
<dbReference type="SUPFAM" id="SSF52129">
    <property type="entry name" value="Caspase-like"/>
    <property type="match status" value="1"/>
</dbReference>
<protein>
    <recommendedName>
        <fullName>Metacaspase-1B</fullName>
        <ecNumber>3.4.22.-</ecNumber>
    </recommendedName>
</protein>
<accession>Q7S4N5</accession>
<name>MCA1B_NEUCR</name>
<gene>
    <name type="primary">casB</name>
    <name type="ORF">NCU02400</name>
</gene>
<organism>
    <name type="scientific">Neurospora crassa (strain ATCC 24698 / 74-OR23-1A / CBS 708.71 / DSM 1257 / FGSC 987)</name>
    <dbReference type="NCBI Taxonomy" id="367110"/>
    <lineage>
        <taxon>Eukaryota</taxon>
        <taxon>Fungi</taxon>
        <taxon>Dikarya</taxon>
        <taxon>Ascomycota</taxon>
        <taxon>Pezizomycotina</taxon>
        <taxon>Sordariomycetes</taxon>
        <taxon>Sordariomycetidae</taxon>
        <taxon>Sordariales</taxon>
        <taxon>Sordariaceae</taxon>
        <taxon>Neurospora</taxon>
    </lineage>
</organism>